<evidence type="ECO:0000250" key="1"/>
<evidence type="ECO:0000255" key="2">
    <source>
        <dbReference type="PROSITE-ProRule" id="PRU00169"/>
    </source>
</evidence>
<evidence type="ECO:0000255" key="3">
    <source>
        <dbReference type="PROSITE-ProRule" id="PRU00193"/>
    </source>
</evidence>
<proteinExistence type="inferred from homology"/>
<gene>
    <name type="ordered locus">RBE_0312</name>
</gene>
<reference key="1">
    <citation type="journal article" date="2006" name="PLoS Genet.">
        <title>Genome sequence of Rickettsia bellii illuminates the role of amoebae in gene exchanges between intracellular pathogens.</title>
        <authorList>
            <person name="Ogata H."/>
            <person name="La Scola B."/>
            <person name="Audic S."/>
            <person name="Renesto P."/>
            <person name="Blanc G."/>
            <person name="Robert C."/>
            <person name="Fournier P.-E."/>
            <person name="Claverie J.-M."/>
            <person name="Raoult D."/>
        </authorList>
    </citation>
    <scope>NUCLEOTIDE SEQUENCE [LARGE SCALE GENOMIC DNA]</scope>
    <source>
        <strain>RML369-C</strain>
    </source>
</reference>
<organism>
    <name type="scientific">Rickettsia bellii (strain RML369-C)</name>
    <dbReference type="NCBI Taxonomy" id="336407"/>
    <lineage>
        <taxon>Bacteria</taxon>
        <taxon>Pseudomonadati</taxon>
        <taxon>Pseudomonadota</taxon>
        <taxon>Alphaproteobacteria</taxon>
        <taxon>Rickettsiales</taxon>
        <taxon>Rickettsiaceae</taxon>
        <taxon>Rickettsieae</taxon>
        <taxon>Rickettsia</taxon>
        <taxon>belli group</taxon>
    </lineage>
</organism>
<keyword id="KW-0067">ATP-binding</keyword>
<keyword id="KW-0547">Nucleotide-binding</keyword>
<keyword id="KW-0597">Phosphoprotein</keyword>
<keyword id="KW-0804">Transcription</keyword>
<keyword id="KW-0805">Transcription regulation</keyword>
<keyword id="KW-0902">Two-component regulatory system</keyword>
<accession>Q1RJS1</accession>
<sequence>MSLIDVLIVDDEEDIRNIIAAILKDEGFNPKVAANSTQALKILAEKPVSAVILDIWLQGSEMDGLGILEVIKKRYPLMPVIIISGHGTIETAVNAIKMGAYDYIEKPFNNDKLVILLKRACEVTKLKRENIDLKSKVIDKTELVGNSTITLKYKAEIDKAASSSSRIMIHGKVGSGKELTARLIHKKSKRVNNLFIIFSPTCMTLEKINQELFGEAEKQESNNNSNKRPTILEFANNGTLYIDEVSNIPVPIQIKLLKFLKDHTIKKPCGKIVKVDIKIITGTSKNIQEEVNNGRFLEDLYYRLNVSSLKVPSLFERKEDIPLLVKYFVKQLSKFSGLKERVFADETIAALQSYEWPGNIRQLRNVVEWTLIMNPITSGNNEIIKPYMIPSEILANSVNLTKLEDSFDMLSMPLREAREVFERQYLSAQMSRFNNNILKTSSFVGMERSALHRKLKLLSLHIPPTGRINEEEYEEANA</sequence>
<protein>
    <recommendedName>
        <fullName>Putative response regulator NtrX-like</fullName>
    </recommendedName>
</protein>
<feature type="chain" id="PRO_0000282381" description="Putative response regulator NtrX-like">
    <location>
        <begin position="1"/>
        <end position="478"/>
    </location>
</feature>
<feature type="domain" description="Response regulatory" evidence="2">
    <location>
        <begin position="5"/>
        <end position="121"/>
    </location>
</feature>
<feature type="domain" description="Sigma-54 factor interaction" evidence="3">
    <location>
        <begin position="143"/>
        <end position="372"/>
    </location>
</feature>
<feature type="binding site" evidence="3">
    <location>
        <begin position="171"/>
        <end position="178"/>
    </location>
    <ligand>
        <name>ATP</name>
        <dbReference type="ChEBI" id="CHEBI:30616"/>
    </ligand>
</feature>
<feature type="binding site" evidence="3">
    <location>
        <begin position="235"/>
        <end position="244"/>
    </location>
    <ligand>
        <name>ATP</name>
        <dbReference type="ChEBI" id="CHEBI:30616"/>
    </ligand>
</feature>
<feature type="modified residue" description="4-aspartylphosphate" evidence="2">
    <location>
        <position position="54"/>
    </location>
</feature>
<name>NTRXL_RICBR</name>
<dbReference type="EMBL" id="CP000087">
    <property type="protein sequence ID" value="ABE04393.1"/>
    <property type="molecule type" value="Genomic_DNA"/>
</dbReference>
<dbReference type="RefSeq" id="WP_011477004.1">
    <property type="nucleotide sequence ID" value="NC_007940.1"/>
</dbReference>
<dbReference type="SMR" id="Q1RJS1"/>
<dbReference type="KEGG" id="rbe:RBE_0312"/>
<dbReference type="eggNOG" id="COG2204">
    <property type="taxonomic scope" value="Bacteria"/>
</dbReference>
<dbReference type="HOGENOM" id="CLU_000445_0_6_5"/>
<dbReference type="OrthoDB" id="9802388at2"/>
<dbReference type="Proteomes" id="UP000001951">
    <property type="component" value="Chromosome"/>
</dbReference>
<dbReference type="GO" id="GO:0005524">
    <property type="term" value="F:ATP binding"/>
    <property type="evidence" value="ECO:0007669"/>
    <property type="project" value="UniProtKB-KW"/>
</dbReference>
<dbReference type="GO" id="GO:0016887">
    <property type="term" value="F:ATP hydrolysis activity"/>
    <property type="evidence" value="ECO:0007669"/>
    <property type="project" value="InterPro"/>
</dbReference>
<dbReference type="GO" id="GO:0043565">
    <property type="term" value="F:sequence-specific DNA binding"/>
    <property type="evidence" value="ECO:0007669"/>
    <property type="project" value="InterPro"/>
</dbReference>
<dbReference type="GO" id="GO:0000160">
    <property type="term" value="P:phosphorelay signal transduction system"/>
    <property type="evidence" value="ECO:0007669"/>
    <property type="project" value="UniProtKB-KW"/>
</dbReference>
<dbReference type="GO" id="GO:0006355">
    <property type="term" value="P:regulation of DNA-templated transcription"/>
    <property type="evidence" value="ECO:0007669"/>
    <property type="project" value="InterPro"/>
</dbReference>
<dbReference type="CDD" id="cd00009">
    <property type="entry name" value="AAA"/>
    <property type="match status" value="1"/>
</dbReference>
<dbReference type="CDD" id="cd17550">
    <property type="entry name" value="REC_NtrX-like"/>
    <property type="match status" value="1"/>
</dbReference>
<dbReference type="FunFam" id="3.40.50.2300:FF:000018">
    <property type="entry name" value="DNA-binding transcriptional regulator NtrC"/>
    <property type="match status" value="1"/>
</dbReference>
<dbReference type="Gene3D" id="1.10.8.60">
    <property type="match status" value="1"/>
</dbReference>
<dbReference type="Gene3D" id="3.40.50.2300">
    <property type="match status" value="1"/>
</dbReference>
<dbReference type="Gene3D" id="1.10.10.60">
    <property type="entry name" value="Homeodomain-like"/>
    <property type="match status" value="1"/>
</dbReference>
<dbReference type="Gene3D" id="3.40.50.300">
    <property type="entry name" value="P-loop containing nucleotide triphosphate hydrolases"/>
    <property type="match status" value="1"/>
</dbReference>
<dbReference type="InterPro" id="IPR003593">
    <property type="entry name" value="AAA+_ATPase"/>
</dbReference>
<dbReference type="InterPro" id="IPR011006">
    <property type="entry name" value="CheY-like_superfamily"/>
</dbReference>
<dbReference type="InterPro" id="IPR009057">
    <property type="entry name" value="Homeodomain-like_sf"/>
</dbReference>
<dbReference type="InterPro" id="IPR002197">
    <property type="entry name" value="HTH_Fis"/>
</dbReference>
<dbReference type="InterPro" id="IPR027417">
    <property type="entry name" value="P-loop_NTPase"/>
</dbReference>
<dbReference type="InterPro" id="IPR001789">
    <property type="entry name" value="Sig_transdc_resp-reg_receiver"/>
</dbReference>
<dbReference type="InterPro" id="IPR002078">
    <property type="entry name" value="Sigma_54_int"/>
</dbReference>
<dbReference type="InterPro" id="IPR025944">
    <property type="entry name" value="Sigma_54_int_dom_CS"/>
</dbReference>
<dbReference type="PANTHER" id="PTHR32071:SF17">
    <property type="entry name" value="TRANSCRIPTIONAL REGULATOR (NTRC FAMILY)"/>
    <property type="match status" value="1"/>
</dbReference>
<dbReference type="PANTHER" id="PTHR32071">
    <property type="entry name" value="TRANSCRIPTIONAL REGULATORY PROTEIN"/>
    <property type="match status" value="1"/>
</dbReference>
<dbReference type="Pfam" id="PF02954">
    <property type="entry name" value="HTH_8"/>
    <property type="match status" value="1"/>
</dbReference>
<dbReference type="Pfam" id="PF00072">
    <property type="entry name" value="Response_reg"/>
    <property type="match status" value="1"/>
</dbReference>
<dbReference type="Pfam" id="PF00158">
    <property type="entry name" value="Sigma54_activat"/>
    <property type="match status" value="1"/>
</dbReference>
<dbReference type="SMART" id="SM00382">
    <property type="entry name" value="AAA"/>
    <property type="match status" value="1"/>
</dbReference>
<dbReference type="SMART" id="SM00448">
    <property type="entry name" value="REC"/>
    <property type="match status" value="1"/>
</dbReference>
<dbReference type="SUPFAM" id="SSF52172">
    <property type="entry name" value="CheY-like"/>
    <property type="match status" value="1"/>
</dbReference>
<dbReference type="SUPFAM" id="SSF46689">
    <property type="entry name" value="Homeodomain-like"/>
    <property type="match status" value="1"/>
</dbReference>
<dbReference type="SUPFAM" id="SSF52540">
    <property type="entry name" value="P-loop containing nucleoside triphosphate hydrolases"/>
    <property type="match status" value="1"/>
</dbReference>
<dbReference type="PROSITE" id="PS50110">
    <property type="entry name" value="RESPONSE_REGULATORY"/>
    <property type="match status" value="1"/>
</dbReference>
<dbReference type="PROSITE" id="PS00688">
    <property type="entry name" value="SIGMA54_INTERACT_3"/>
    <property type="match status" value="1"/>
</dbReference>
<dbReference type="PROSITE" id="PS50045">
    <property type="entry name" value="SIGMA54_INTERACT_4"/>
    <property type="match status" value="1"/>
</dbReference>
<comment type="function">
    <text evidence="1">Member of the two-component regulatory system RBE_0312/RBE_0470.</text>
</comment>